<protein>
    <recommendedName>
        <fullName evidence="1">Large ribosomal subunit protein bL31B</fullName>
    </recommendedName>
    <alternativeName>
        <fullName evidence="2">50S ribosomal protein L31 type B</fullName>
    </alternativeName>
</protein>
<dbReference type="EMBL" id="CP001048">
    <property type="protein sequence ID" value="ACC88005.1"/>
    <property type="molecule type" value="Genomic_DNA"/>
</dbReference>
<dbReference type="RefSeq" id="WP_002208617.1">
    <property type="nucleotide sequence ID" value="NZ_CP009780.1"/>
</dbReference>
<dbReference type="SMR" id="B2K6Y1"/>
<dbReference type="KEGG" id="ypb:YPTS_1024"/>
<dbReference type="PATRIC" id="fig|502801.10.peg.367"/>
<dbReference type="GO" id="GO:1990904">
    <property type="term" value="C:ribonucleoprotein complex"/>
    <property type="evidence" value="ECO:0007669"/>
    <property type="project" value="UniProtKB-KW"/>
</dbReference>
<dbReference type="GO" id="GO:0005840">
    <property type="term" value="C:ribosome"/>
    <property type="evidence" value="ECO:0007669"/>
    <property type="project" value="UniProtKB-KW"/>
</dbReference>
<dbReference type="GO" id="GO:0003735">
    <property type="term" value="F:structural constituent of ribosome"/>
    <property type="evidence" value="ECO:0007669"/>
    <property type="project" value="InterPro"/>
</dbReference>
<dbReference type="GO" id="GO:0006412">
    <property type="term" value="P:translation"/>
    <property type="evidence" value="ECO:0007669"/>
    <property type="project" value="UniProtKB-UniRule"/>
</dbReference>
<dbReference type="Gene3D" id="4.10.830.30">
    <property type="entry name" value="Ribosomal protein L31"/>
    <property type="match status" value="1"/>
</dbReference>
<dbReference type="HAMAP" id="MF_00502">
    <property type="entry name" value="Ribosomal_bL31_2"/>
    <property type="match status" value="1"/>
</dbReference>
<dbReference type="InterPro" id="IPR034704">
    <property type="entry name" value="Ribosomal_bL28/bL31-like_sf"/>
</dbReference>
<dbReference type="InterPro" id="IPR002150">
    <property type="entry name" value="Ribosomal_bL31"/>
</dbReference>
<dbReference type="InterPro" id="IPR027493">
    <property type="entry name" value="Ribosomal_bL31_B"/>
</dbReference>
<dbReference type="InterPro" id="IPR042105">
    <property type="entry name" value="Ribosomal_bL31_sf"/>
</dbReference>
<dbReference type="NCBIfam" id="TIGR00105">
    <property type="entry name" value="L31"/>
    <property type="match status" value="1"/>
</dbReference>
<dbReference type="NCBIfam" id="NF002462">
    <property type="entry name" value="PRK01678.1"/>
    <property type="match status" value="1"/>
</dbReference>
<dbReference type="PANTHER" id="PTHR33280">
    <property type="entry name" value="50S RIBOSOMAL PROTEIN L31, CHLOROPLASTIC"/>
    <property type="match status" value="1"/>
</dbReference>
<dbReference type="PANTHER" id="PTHR33280:SF1">
    <property type="entry name" value="LARGE RIBOSOMAL SUBUNIT PROTEIN BL31C"/>
    <property type="match status" value="1"/>
</dbReference>
<dbReference type="Pfam" id="PF01197">
    <property type="entry name" value="Ribosomal_L31"/>
    <property type="match status" value="1"/>
</dbReference>
<dbReference type="PRINTS" id="PR01249">
    <property type="entry name" value="RIBOSOMALL31"/>
</dbReference>
<dbReference type="SUPFAM" id="SSF143800">
    <property type="entry name" value="L28p-like"/>
    <property type="match status" value="1"/>
</dbReference>
<proteinExistence type="inferred from homology"/>
<accession>B2K6Y1</accession>
<reference key="1">
    <citation type="submission" date="2008-04" db="EMBL/GenBank/DDBJ databases">
        <title>Complete sequence of Yersinia pseudotuberculosis PB1/+.</title>
        <authorList>
            <person name="Copeland A."/>
            <person name="Lucas S."/>
            <person name="Lapidus A."/>
            <person name="Glavina del Rio T."/>
            <person name="Dalin E."/>
            <person name="Tice H."/>
            <person name="Bruce D."/>
            <person name="Goodwin L."/>
            <person name="Pitluck S."/>
            <person name="Munk A.C."/>
            <person name="Brettin T."/>
            <person name="Detter J.C."/>
            <person name="Han C."/>
            <person name="Tapia R."/>
            <person name="Schmutz J."/>
            <person name="Larimer F."/>
            <person name="Land M."/>
            <person name="Hauser L."/>
            <person name="Challacombe J.F."/>
            <person name="Green L."/>
            <person name="Lindler L.E."/>
            <person name="Nikolich M.P."/>
            <person name="Richardson P."/>
        </authorList>
    </citation>
    <scope>NUCLEOTIDE SEQUENCE [LARGE SCALE GENOMIC DNA]</scope>
    <source>
        <strain>PB1/+</strain>
    </source>
</reference>
<feature type="chain" id="PRO_1000126848" description="Large ribosomal subunit protein bL31B">
    <location>
        <begin position="1"/>
        <end position="86"/>
    </location>
</feature>
<organism>
    <name type="scientific">Yersinia pseudotuberculosis serotype IB (strain PB1/+)</name>
    <dbReference type="NCBI Taxonomy" id="502801"/>
    <lineage>
        <taxon>Bacteria</taxon>
        <taxon>Pseudomonadati</taxon>
        <taxon>Pseudomonadota</taxon>
        <taxon>Gammaproteobacteria</taxon>
        <taxon>Enterobacterales</taxon>
        <taxon>Yersiniaceae</taxon>
        <taxon>Yersinia</taxon>
    </lineage>
</organism>
<comment type="subunit">
    <text evidence="1">Part of the 50S ribosomal subunit.</text>
</comment>
<comment type="similarity">
    <text evidence="1">Belongs to the bacterial ribosomal protein bL31 family. Type B subfamily.</text>
</comment>
<keyword id="KW-0687">Ribonucleoprotein</keyword>
<keyword id="KW-0689">Ribosomal protein</keyword>
<gene>
    <name evidence="1" type="primary">rpmE2</name>
    <name type="ordered locus">YPTS_1024</name>
</gene>
<evidence type="ECO:0000255" key="1">
    <source>
        <dbReference type="HAMAP-Rule" id="MF_00502"/>
    </source>
</evidence>
<evidence type="ECO:0000305" key="2"/>
<sequence length="86" mass="9795">MKPNIHPPYRTVVFHDTSADAYFTVGSTIATERTIERDGQTYPYVTLDISSASHPYYTGKQKEFAKEGSTARFHQRFGSFLTKKTN</sequence>
<name>RL31B_YERPB</name>